<name>ILVE_THEMA</name>
<reference key="1">
    <citation type="journal article" date="1999" name="Nature">
        <title>Evidence for lateral gene transfer between Archaea and Bacteria from genome sequence of Thermotoga maritima.</title>
        <authorList>
            <person name="Nelson K.E."/>
            <person name="Clayton R.A."/>
            <person name="Gill S.R."/>
            <person name="Gwinn M.L."/>
            <person name="Dodson R.J."/>
            <person name="Haft D.H."/>
            <person name="Hickey E.K."/>
            <person name="Peterson J.D."/>
            <person name="Nelson W.C."/>
            <person name="Ketchum K.A."/>
            <person name="McDonald L.A."/>
            <person name="Utterback T.R."/>
            <person name="Malek J.A."/>
            <person name="Linher K.D."/>
            <person name="Garrett M.M."/>
            <person name="Stewart A.M."/>
            <person name="Cotton M.D."/>
            <person name="Pratt M.S."/>
            <person name="Phillips C.A."/>
            <person name="Richardson D.L."/>
            <person name="Heidelberg J.F."/>
            <person name="Sutton G.G."/>
            <person name="Fleischmann R.D."/>
            <person name="Eisen J.A."/>
            <person name="White O."/>
            <person name="Salzberg S.L."/>
            <person name="Smith H.O."/>
            <person name="Venter J.C."/>
            <person name="Fraser C.M."/>
        </authorList>
    </citation>
    <scope>NUCLEOTIDE SEQUENCE [LARGE SCALE GENOMIC DNA]</scope>
    <source>
        <strain>ATCC 43589 / DSM 3109 / JCM 10099 / NBRC 100826 / MSB8</strain>
    </source>
</reference>
<reference key="2">
    <citation type="journal article" date="1996" name="Gene">
        <title>A gyrB-like gene from the hyperthermophilic bacterion Thermotoga maritima.</title>
        <authorList>
            <person name="Guipaud O."/>
            <person name="Labedan B."/>
            <person name="Forterre P."/>
        </authorList>
    </citation>
    <scope>NUCLEOTIDE SEQUENCE [GENOMIC DNA] OF 68-273</scope>
    <source>
        <strain>ATCC 43589 / DSM 3109 / JCM 10099 / NBRC 100826 / MSB8</strain>
    </source>
</reference>
<proteinExistence type="evidence at protein level"/>
<sequence length="273" mass="31158">MLIWWRGKFRRADEISLDFSLFEKSLQGAVYETLRTYSRAPFAAYKHYTRLKRSADFFNLPLSLSFDEFTKVLKAGADEFKQEVRIKVYLFPDSGEVLFVFSPLNIPDLETGVEVKISNVRRIPDLSTPPALKITGRTDIVLARREIVDCYDVILLGLNGQVCEGSFSNVFLVKEGKLITPSLDSGILDGITRENVIKLAKSLEIPVEERVVWVWELFEADEMFLTHTSAGVVPVRRLNEHSFFEEEPGPVTATLMENFEPFVLNLEENWVGI</sequence>
<dbReference type="EC" id="2.6.1.42"/>
<dbReference type="EMBL" id="AE000512">
    <property type="protein sequence ID" value="AAD35913.1"/>
    <property type="molecule type" value="Genomic_DNA"/>
</dbReference>
<dbReference type="EMBL" id="U49692">
    <property type="protein sequence ID" value="AAC44497.1"/>
    <property type="molecule type" value="Genomic_DNA"/>
</dbReference>
<dbReference type="PIR" id="C72328">
    <property type="entry name" value="C72328"/>
</dbReference>
<dbReference type="RefSeq" id="NP_228640.1">
    <property type="nucleotide sequence ID" value="NC_000853.1"/>
</dbReference>
<dbReference type="RefSeq" id="WP_004080810.1">
    <property type="nucleotide sequence ID" value="NC_000853.1"/>
</dbReference>
<dbReference type="PDB" id="3CSW">
    <property type="method" value="X-ray"/>
    <property type="resolution" value="2.15 A"/>
    <property type="chains" value="A/B/C/D=2-273"/>
</dbReference>
<dbReference type="PDBsum" id="3CSW"/>
<dbReference type="SMR" id="P74921"/>
<dbReference type="FunCoup" id="P74921">
    <property type="interactions" value="76"/>
</dbReference>
<dbReference type="STRING" id="243274.TM_0831"/>
<dbReference type="PaxDb" id="243274-THEMA_00485"/>
<dbReference type="EnsemblBacteria" id="AAD35913">
    <property type="protein sequence ID" value="AAD35913"/>
    <property type="gene ID" value="TM_0831"/>
</dbReference>
<dbReference type="KEGG" id="tma:TM0831"/>
<dbReference type="KEGG" id="tmi:THEMA_00485"/>
<dbReference type="KEGG" id="tmm:Tmari_0833"/>
<dbReference type="KEGG" id="tmw:THMA_0852"/>
<dbReference type="eggNOG" id="COG0115">
    <property type="taxonomic scope" value="Bacteria"/>
</dbReference>
<dbReference type="InParanoid" id="P74921"/>
<dbReference type="OrthoDB" id="9805628at2"/>
<dbReference type="UniPathway" id="UPA00047">
    <property type="reaction ID" value="UER00058"/>
</dbReference>
<dbReference type="UniPathway" id="UPA00048">
    <property type="reaction ID" value="UER00073"/>
</dbReference>
<dbReference type="UniPathway" id="UPA00049">
    <property type="reaction ID" value="UER00062"/>
</dbReference>
<dbReference type="EvolutionaryTrace" id="P74921"/>
<dbReference type="Proteomes" id="UP000008183">
    <property type="component" value="Chromosome"/>
</dbReference>
<dbReference type="GO" id="GO:0052656">
    <property type="term" value="F:L-isoleucine-2-oxoglutarate transaminase activity"/>
    <property type="evidence" value="ECO:0007669"/>
    <property type="project" value="RHEA"/>
</dbReference>
<dbReference type="GO" id="GO:0052654">
    <property type="term" value="F:L-leucine-2-oxoglutarate transaminase activity"/>
    <property type="evidence" value="ECO:0007669"/>
    <property type="project" value="RHEA"/>
</dbReference>
<dbReference type="GO" id="GO:0052655">
    <property type="term" value="F:L-valine-2-oxoglutarate transaminase activity"/>
    <property type="evidence" value="ECO:0007669"/>
    <property type="project" value="RHEA"/>
</dbReference>
<dbReference type="GO" id="GO:0019752">
    <property type="term" value="P:carboxylic acid metabolic process"/>
    <property type="evidence" value="ECO:0000318"/>
    <property type="project" value="GO_Central"/>
</dbReference>
<dbReference type="GO" id="GO:0009097">
    <property type="term" value="P:isoleucine biosynthetic process"/>
    <property type="evidence" value="ECO:0007669"/>
    <property type="project" value="UniProtKB-UniPathway"/>
</dbReference>
<dbReference type="GO" id="GO:0009098">
    <property type="term" value="P:L-leucine biosynthetic process"/>
    <property type="evidence" value="ECO:0007669"/>
    <property type="project" value="UniProtKB-UniPathway"/>
</dbReference>
<dbReference type="GO" id="GO:0009099">
    <property type="term" value="P:L-valine biosynthetic process"/>
    <property type="evidence" value="ECO:0007669"/>
    <property type="project" value="UniProtKB-UniPathway"/>
</dbReference>
<dbReference type="CDD" id="cd00449">
    <property type="entry name" value="PLPDE_IV"/>
    <property type="match status" value="1"/>
</dbReference>
<dbReference type="FunFam" id="3.20.10.10:FF:000002">
    <property type="entry name" value="D-alanine aminotransferase"/>
    <property type="match status" value="1"/>
</dbReference>
<dbReference type="Gene3D" id="3.30.470.10">
    <property type="match status" value="1"/>
</dbReference>
<dbReference type="Gene3D" id="3.20.10.10">
    <property type="entry name" value="D-amino Acid Aminotransferase, subunit A, domain 2"/>
    <property type="match status" value="1"/>
</dbReference>
<dbReference type="InterPro" id="IPR001544">
    <property type="entry name" value="Aminotrans_IV"/>
</dbReference>
<dbReference type="InterPro" id="IPR018300">
    <property type="entry name" value="Aminotrans_IV_CS"/>
</dbReference>
<dbReference type="InterPro" id="IPR036038">
    <property type="entry name" value="Aminotransferase-like"/>
</dbReference>
<dbReference type="InterPro" id="IPR043132">
    <property type="entry name" value="BCAT-like_C"/>
</dbReference>
<dbReference type="InterPro" id="IPR043131">
    <property type="entry name" value="BCAT-like_N"/>
</dbReference>
<dbReference type="InterPro" id="IPR050571">
    <property type="entry name" value="Class-IV_PLP-Dep_Aminotrnsfr"/>
</dbReference>
<dbReference type="PANTHER" id="PTHR42743">
    <property type="entry name" value="AMINO-ACID AMINOTRANSFERASE"/>
    <property type="match status" value="1"/>
</dbReference>
<dbReference type="PANTHER" id="PTHR42743:SF4">
    <property type="entry name" value="BRANCHED-CHAIN-AMINO-ACID AMINOTRANSFERASE-RELATED"/>
    <property type="match status" value="1"/>
</dbReference>
<dbReference type="Pfam" id="PF01063">
    <property type="entry name" value="Aminotran_4"/>
    <property type="match status" value="1"/>
</dbReference>
<dbReference type="SUPFAM" id="SSF56752">
    <property type="entry name" value="D-aminoacid aminotransferase-like PLP-dependent enzymes"/>
    <property type="match status" value="1"/>
</dbReference>
<dbReference type="PROSITE" id="PS00770">
    <property type="entry name" value="AA_TRANSFER_CLASS_4"/>
    <property type="match status" value="1"/>
</dbReference>
<comment type="function">
    <text evidence="1">Acts on leucine, isoleucine and valine.</text>
</comment>
<comment type="catalytic activity">
    <reaction>
        <text>L-leucine + 2-oxoglutarate = 4-methyl-2-oxopentanoate + L-glutamate</text>
        <dbReference type="Rhea" id="RHEA:18321"/>
        <dbReference type="ChEBI" id="CHEBI:16810"/>
        <dbReference type="ChEBI" id="CHEBI:17865"/>
        <dbReference type="ChEBI" id="CHEBI:29985"/>
        <dbReference type="ChEBI" id="CHEBI:57427"/>
        <dbReference type="EC" id="2.6.1.42"/>
    </reaction>
</comment>
<comment type="catalytic activity">
    <reaction>
        <text>L-isoleucine + 2-oxoglutarate = (S)-3-methyl-2-oxopentanoate + L-glutamate</text>
        <dbReference type="Rhea" id="RHEA:24801"/>
        <dbReference type="ChEBI" id="CHEBI:16810"/>
        <dbReference type="ChEBI" id="CHEBI:29985"/>
        <dbReference type="ChEBI" id="CHEBI:35146"/>
        <dbReference type="ChEBI" id="CHEBI:58045"/>
        <dbReference type="EC" id="2.6.1.42"/>
    </reaction>
</comment>
<comment type="catalytic activity">
    <reaction>
        <text>L-valine + 2-oxoglutarate = 3-methyl-2-oxobutanoate + L-glutamate</text>
        <dbReference type="Rhea" id="RHEA:24813"/>
        <dbReference type="ChEBI" id="CHEBI:11851"/>
        <dbReference type="ChEBI" id="CHEBI:16810"/>
        <dbReference type="ChEBI" id="CHEBI:29985"/>
        <dbReference type="ChEBI" id="CHEBI:57762"/>
        <dbReference type="EC" id="2.6.1.42"/>
    </reaction>
</comment>
<comment type="cofactor">
    <cofactor>
        <name>pyridoxal 5'-phosphate</name>
        <dbReference type="ChEBI" id="CHEBI:597326"/>
    </cofactor>
</comment>
<comment type="pathway">
    <text>Amino-acid biosynthesis; L-isoleucine biosynthesis; L-isoleucine from 2-oxobutanoate: step 4/4.</text>
</comment>
<comment type="pathway">
    <text>Amino-acid biosynthesis; L-leucine biosynthesis; L-leucine from 3-methyl-2-oxobutanoate: step 4/4.</text>
</comment>
<comment type="pathway">
    <text>Amino-acid biosynthesis; L-valine biosynthesis; L-valine from pyruvate: step 4/4.</text>
</comment>
<comment type="similarity">
    <text evidence="2">Belongs to the class-IV pyridoxal-phosphate-dependent aminotransferase family.</text>
</comment>
<accession>P74921</accession>
<protein>
    <recommendedName>
        <fullName>Probable branched-chain-amino-acid aminotransferase</fullName>
        <shortName>BCAT</shortName>
        <ecNumber>2.6.1.42</ecNumber>
    </recommendedName>
</protein>
<feature type="chain" id="PRO_0000103287" description="Probable branched-chain-amino-acid aminotransferase">
    <location>
        <begin position="1"/>
        <end position="273"/>
    </location>
</feature>
<feature type="modified residue" description="N6-(pyridoxal phosphate)lysine" evidence="1">
    <location>
        <position position="133"/>
    </location>
</feature>
<feature type="sequence conflict" description="In Ref. 2; AAC44497." evidence="2" ref="2">
    <original>A</original>
    <variation>R</variation>
    <location>
        <position position="77"/>
    </location>
</feature>
<feature type="strand" evidence="3">
    <location>
        <begin position="2"/>
        <end position="5"/>
    </location>
</feature>
<feature type="strand" evidence="3">
    <location>
        <begin position="8"/>
        <end position="18"/>
    </location>
</feature>
<feature type="helix" evidence="3">
    <location>
        <begin position="19"/>
        <end position="25"/>
    </location>
</feature>
<feature type="strand" evidence="3">
    <location>
        <begin position="30"/>
        <end position="37"/>
    </location>
</feature>
<feature type="helix" evidence="3">
    <location>
        <begin position="44"/>
        <end position="56"/>
    </location>
</feature>
<feature type="turn" evidence="3">
    <location>
        <begin position="57"/>
        <end position="59"/>
    </location>
</feature>
<feature type="helix" evidence="3">
    <location>
        <begin position="66"/>
        <end position="77"/>
    </location>
</feature>
<feature type="strand" evidence="3">
    <location>
        <begin position="84"/>
        <end position="90"/>
    </location>
</feature>
<feature type="turn" evidence="3">
    <location>
        <begin position="92"/>
        <end position="94"/>
    </location>
</feature>
<feature type="strand" evidence="3">
    <location>
        <begin position="97"/>
        <end position="103"/>
    </location>
</feature>
<feature type="strand" evidence="3">
    <location>
        <begin position="113"/>
        <end position="117"/>
    </location>
</feature>
<feature type="turn" evidence="3">
    <location>
        <begin position="125"/>
        <end position="127"/>
    </location>
</feature>
<feature type="helix" evidence="3">
    <location>
        <begin position="138"/>
        <end position="144"/>
    </location>
</feature>
<feature type="strand" evidence="3">
    <location>
        <begin position="148"/>
        <end position="156"/>
    </location>
</feature>
<feature type="strand" evidence="3">
    <location>
        <begin position="160"/>
        <end position="174"/>
    </location>
</feature>
<feature type="strand" evidence="3">
    <location>
        <begin position="177"/>
        <end position="181"/>
    </location>
</feature>
<feature type="helix" evidence="3">
    <location>
        <begin position="183"/>
        <end position="185"/>
    </location>
</feature>
<feature type="helix" evidence="3">
    <location>
        <begin position="191"/>
        <end position="202"/>
    </location>
</feature>
<feature type="strand" evidence="3">
    <location>
        <begin position="207"/>
        <end position="210"/>
    </location>
</feature>
<feature type="helix" evidence="3">
    <location>
        <begin position="214"/>
        <end position="218"/>
    </location>
</feature>
<feature type="strand" evidence="3">
    <location>
        <begin position="221"/>
        <end position="227"/>
    </location>
</feature>
<feature type="turn" evidence="3">
    <location>
        <begin position="228"/>
        <end position="230"/>
    </location>
</feature>
<feature type="strand" evidence="3">
    <location>
        <begin position="231"/>
        <end position="238"/>
    </location>
</feature>
<feature type="strand" evidence="3">
    <location>
        <begin position="241"/>
        <end position="243"/>
    </location>
</feature>
<feature type="strand" evidence="3">
    <location>
        <begin position="245"/>
        <end position="247"/>
    </location>
</feature>
<feature type="helix" evidence="3">
    <location>
        <begin position="250"/>
        <end position="264"/>
    </location>
</feature>
<feature type="helix" evidence="3">
    <location>
        <begin position="267"/>
        <end position="269"/>
    </location>
</feature>
<feature type="turn" evidence="3">
    <location>
        <begin position="270"/>
        <end position="272"/>
    </location>
</feature>
<keyword id="KW-0002">3D-structure</keyword>
<keyword id="KW-0028">Amino-acid biosynthesis</keyword>
<keyword id="KW-0032">Aminotransferase</keyword>
<keyword id="KW-0100">Branched-chain amino acid biosynthesis</keyword>
<keyword id="KW-0663">Pyridoxal phosphate</keyword>
<keyword id="KW-1185">Reference proteome</keyword>
<keyword id="KW-0808">Transferase</keyword>
<evidence type="ECO:0000250" key="1"/>
<evidence type="ECO:0000305" key="2"/>
<evidence type="ECO:0007829" key="3">
    <source>
        <dbReference type="PDB" id="3CSW"/>
    </source>
</evidence>
<gene>
    <name type="primary">ilvE</name>
    <name type="ordered locus">TM_0831</name>
</gene>
<organism>
    <name type="scientific">Thermotoga maritima (strain ATCC 43589 / DSM 3109 / JCM 10099 / NBRC 100826 / MSB8)</name>
    <dbReference type="NCBI Taxonomy" id="243274"/>
    <lineage>
        <taxon>Bacteria</taxon>
        <taxon>Thermotogati</taxon>
        <taxon>Thermotogota</taxon>
        <taxon>Thermotogae</taxon>
        <taxon>Thermotogales</taxon>
        <taxon>Thermotogaceae</taxon>
        <taxon>Thermotoga</taxon>
    </lineage>
</organism>